<gene>
    <name type="primary">B14</name>
</gene>
<keyword id="KW-1015">Disulfide bond</keyword>
<keyword id="KW-0928">Hypersensitive response elicitation</keyword>
<keyword id="KW-0964">Secreted</keyword>
<keyword id="KW-0732">Signal</keyword>
<proteinExistence type="inferred from homology"/>
<feature type="signal peptide" evidence="1">
    <location>
        <begin position="1"/>
        <end position="20"/>
    </location>
</feature>
<feature type="chain" id="PRO_0000007796" description="Acidic elicitin A1">
    <location>
        <begin position="21"/>
        <end position="118"/>
    </location>
</feature>
<feature type="disulfide bond" evidence="1">
    <location>
        <begin position="23"/>
        <end position="91"/>
    </location>
</feature>
<feature type="disulfide bond" evidence="1">
    <location>
        <begin position="47"/>
        <end position="76"/>
    </location>
</feature>
<feature type="disulfide bond" evidence="1">
    <location>
        <begin position="71"/>
        <end position="115"/>
    </location>
</feature>
<organism>
    <name type="scientific">Phytophthora cryptogea</name>
    <dbReference type="NCBI Taxonomy" id="4786"/>
    <lineage>
        <taxon>Eukaryota</taxon>
        <taxon>Sar</taxon>
        <taxon>Stramenopiles</taxon>
        <taxon>Oomycota</taxon>
        <taxon>Peronosporales</taxon>
        <taxon>Peronosporaceae</taxon>
        <taxon>Phytophthora</taxon>
    </lineage>
</organism>
<protein>
    <recommendedName>
        <fullName>Acidic elicitin A1</fullName>
    </recommendedName>
</protein>
<name>ELIA1_PHYCR</name>
<accession>P41802</accession>
<comment type="function">
    <text>Induces local and distal defense responses (incompatible hypersensitive reaction) in plants from the solanaceae and cruciferae families. Elicits leaf necrosis and causes the accumulation of pathogenesis-related proteins. Might interact with the lipidic molecules of the plasma membrane.</text>
</comment>
<comment type="subcellular location">
    <subcellularLocation>
        <location>Secreted</location>
    </subcellularLocation>
</comment>
<comment type="similarity">
    <text evidence="2">Belongs to the elicitin family.</text>
</comment>
<dbReference type="EMBL" id="Z34462">
    <property type="protein sequence ID" value="CAA84227.1"/>
    <property type="molecule type" value="Genomic_DNA"/>
</dbReference>
<dbReference type="PIR" id="S49905">
    <property type="entry name" value="S49905"/>
</dbReference>
<dbReference type="SMR" id="P41802"/>
<dbReference type="GO" id="GO:0005576">
    <property type="term" value="C:extracellular region"/>
    <property type="evidence" value="ECO:0007669"/>
    <property type="project" value="UniProtKB-SubCell"/>
</dbReference>
<dbReference type="GO" id="GO:0052040">
    <property type="term" value="P:symbiont-mediated perturbation of host programmed cell death"/>
    <property type="evidence" value="ECO:0007669"/>
    <property type="project" value="UniProtKB-KW"/>
</dbReference>
<dbReference type="Gene3D" id="1.10.239.10">
    <property type="entry name" value="Elicitin domain"/>
    <property type="match status" value="1"/>
</dbReference>
<dbReference type="InterPro" id="IPR002200">
    <property type="entry name" value="Elicitin"/>
</dbReference>
<dbReference type="InterPro" id="IPR036470">
    <property type="entry name" value="Elicitin_sf"/>
</dbReference>
<dbReference type="Pfam" id="PF00964">
    <property type="entry name" value="Elicitin"/>
    <property type="match status" value="1"/>
</dbReference>
<dbReference type="PRINTS" id="PR00948">
    <property type="entry name" value="ELICITIN"/>
</dbReference>
<dbReference type="SMART" id="SM01187">
    <property type="entry name" value="Elicitin"/>
    <property type="match status" value="1"/>
</dbReference>
<dbReference type="SUPFAM" id="SSF48647">
    <property type="entry name" value="Fungal elicitin"/>
    <property type="match status" value="1"/>
</dbReference>
<evidence type="ECO:0000250" key="1"/>
<evidence type="ECO:0000305" key="2"/>
<sequence length="118" mass="12181">MNFRALFAATVAALVGSTSATTCTTTQQTAAYVALVSILSDSSFNQCATDSGYSMLTATSLPTTDQYKLMCASTACNSMIAKIISLNAPDCELTVPTSGLVLNVYSYANGFSATCASL</sequence>
<reference key="1">
    <citation type="journal article" date="1995" name="Mol. Plant Microbe Interact.">
        <title>Characterization of a gene cluster of Phytophthora cryptogea which codes for elicitins, proteins inducing a hypersensitive-like response in tobacco.</title>
        <authorList>
            <person name="Panabieres F."/>
            <person name="Marais A."/>
            <person name="Le Berre J.Y."/>
            <person name="Penot I."/>
            <person name="Fournier D."/>
            <person name="Ricci P."/>
        </authorList>
    </citation>
    <scope>NUCLEOTIDE SEQUENCE [GENOMIC DNA]</scope>
    <source>
        <strain>Isolate 52</strain>
    </source>
</reference>